<dbReference type="EC" id="2.8.1.13" evidence="1"/>
<dbReference type="EMBL" id="AP008230">
    <property type="protein sequence ID" value="BAE84213.1"/>
    <property type="molecule type" value="Genomic_DNA"/>
</dbReference>
<dbReference type="RefSeq" id="WP_011460325.1">
    <property type="nucleotide sequence ID" value="NC_007907.1"/>
</dbReference>
<dbReference type="SMR" id="Q24US9"/>
<dbReference type="STRING" id="138119.DSY2424"/>
<dbReference type="KEGG" id="dsy:DSY2424"/>
<dbReference type="eggNOG" id="COG0482">
    <property type="taxonomic scope" value="Bacteria"/>
</dbReference>
<dbReference type="HOGENOM" id="CLU_035188_0_0_9"/>
<dbReference type="Proteomes" id="UP000001946">
    <property type="component" value="Chromosome"/>
</dbReference>
<dbReference type="GO" id="GO:0005737">
    <property type="term" value="C:cytoplasm"/>
    <property type="evidence" value="ECO:0007669"/>
    <property type="project" value="UniProtKB-SubCell"/>
</dbReference>
<dbReference type="GO" id="GO:0005524">
    <property type="term" value="F:ATP binding"/>
    <property type="evidence" value="ECO:0007669"/>
    <property type="project" value="UniProtKB-KW"/>
</dbReference>
<dbReference type="GO" id="GO:0000049">
    <property type="term" value="F:tRNA binding"/>
    <property type="evidence" value="ECO:0007669"/>
    <property type="project" value="UniProtKB-KW"/>
</dbReference>
<dbReference type="GO" id="GO:0103016">
    <property type="term" value="F:tRNA-uridine 2-sulfurtransferase activity"/>
    <property type="evidence" value="ECO:0007669"/>
    <property type="project" value="UniProtKB-EC"/>
</dbReference>
<dbReference type="GO" id="GO:0002143">
    <property type="term" value="P:tRNA wobble position uridine thiolation"/>
    <property type="evidence" value="ECO:0007669"/>
    <property type="project" value="TreeGrafter"/>
</dbReference>
<dbReference type="CDD" id="cd01998">
    <property type="entry name" value="MnmA_TRMU-like"/>
    <property type="match status" value="1"/>
</dbReference>
<dbReference type="FunFam" id="2.30.30.280:FF:000001">
    <property type="entry name" value="tRNA-specific 2-thiouridylase MnmA"/>
    <property type="match status" value="1"/>
</dbReference>
<dbReference type="FunFam" id="3.40.50.620:FF:000115">
    <property type="entry name" value="tRNA-specific 2-thiouridylase MnmA"/>
    <property type="match status" value="1"/>
</dbReference>
<dbReference type="Gene3D" id="2.30.30.280">
    <property type="entry name" value="Adenine nucleotide alpha hydrolases-like domains"/>
    <property type="match status" value="1"/>
</dbReference>
<dbReference type="Gene3D" id="3.40.50.620">
    <property type="entry name" value="HUPs"/>
    <property type="match status" value="1"/>
</dbReference>
<dbReference type="Gene3D" id="2.40.30.10">
    <property type="entry name" value="Translation factors"/>
    <property type="match status" value="1"/>
</dbReference>
<dbReference type="HAMAP" id="MF_00144">
    <property type="entry name" value="tRNA_thiouridyl_MnmA"/>
    <property type="match status" value="1"/>
</dbReference>
<dbReference type="InterPro" id="IPR004506">
    <property type="entry name" value="MnmA-like"/>
</dbReference>
<dbReference type="InterPro" id="IPR046885">
    <property type="entry name" value="MnmA-like_C"/>
</dbReference>
<dbReference type="InterPro" id="IPR046884">
    <property type="entry name" value="MnmA-like_central"/>
</dbReference>
<dbReference type="InterPro" id="IPR023382">
    <property type="entry name" value="MnmA-like_central_sf"/>
</dbReference>
<dbReference type="InterPro" id="IPR014729">
    <property type="entry name" value="Rossmann-like_a/b/a_fold"/>
</dbReference>
<dbReference type="NCBIfam" id="NF001138">
    <property type="entry name" value="PRK00143.1"/>
    <property type="match status" value="1"/>
</dbReference>
<dbReference type="NCBIfam" id="TIGR00420">
    <property type="entry name" value="trmU"/>
    <property type="match status" value="1"/>
</dbReference>
<dbReference type="PANTHER" id="PTHR11933:SF5">
    <property type="entry name" value="MITOCHONDRIAL TRNA-SPECIFIC 2-THIOURIDYLASE 1"/>
    <property type="match status" value="1"/>
</dbReference>
<dbReference type="PANTHER" id="PTHR11933">
    <property type="entry name" value="TRNA 5-METHYLAMINOMETHYL-2-THIOURIDYLATE -METHYLTRANSFERASE"/>
    <property type="match status" value="1"/>
</dbReference>
<dbReference type="Pfam" id="PF03054">
    <property type="entry name" value="tRNA_Me_trans"/>
    <property type="match status" value="1"/>
</dbReference>
<dbReference type="Pfam" id="PF20258">
    <property type="entry name" value="tRNA_Me_trans_C"/>
    <property type="match status" value="1"/>
</dbReference>
<dbReference type="Pfam" id="PF20259">
    <property type="entry name" value="tRNA_Me_trans_M"/>
    <property type="match status" value="1"/>
</dbReference>
<dbReference type="SUPFAM" id="SSF52402">
    <property type="entry name" value="Adenine nucleotide alpha hydrolases-like"/>
    <property type="match status" value="1"/>
</dbReference>
<organism>
    <name type="scientific">Desulfitobacterium hafniense (strain Y51)</name>
    <dbReference type="NCBI Taxonomy" id="138119"/>
    <lineage>
        <taxon>Bacteria</taxon>
        <taxon>Bacillati</taxon>
        <taxon>Bacillota</taxon>
        <taxon>Clostridia</taxon>
        <taxon>Eubacteriales</taxon>
        <taxon>Desulfitobacteriaceae</taxon>
        <taxon>Desulfitobacterium</taxon>
    </lineage>
</organism>
<evidence type="ECO:0000255" key="1">
    <source>
        <dbReference type="HAMAP-Rule" id="MF_00144"/>
    </source>
</evidence>
<reference key="1">
    <citation type="journal article" date="2006" name="J. Bacteriol.">
        <title>Complete genome sequence of the dehalorespiring bacterium Desulfitobacterium hafniense Y51 and comparison with Dehalococcoides ethenogenes 195.</title>
        <authorList>
            <person name="Nonaka H."/>
            <person name="Keresztes G."/>
            <person name="Shinoda Y."/>
            <person name="Ikenaga Y."/>
            <person name="Abe M."/>
            <person name="Naito K."/>
            <person name="Inatomi K."/>
            <person name="Furukawa K."/>
            <person name="Inui M."/>
            <person name="Yukawa H."/>
        </authorList>
    </citation>
    <scope>NUCLEOTIDE SEQUENCE [LARGE SCALE GENOMIC DNA]</scope>
    <source>
        <strain>Y51</strain>
    </source>
</reference>
<gene>
    <name evidence="1" type="primary">mnmA</name>
    <name type="ordered locus">DSY2424</name>
</gene>
<comment type="function">
    <text evidence="1">Catalyzes the 2-thiolation of uridine at the wobble position (U34) of tRNA, leading to the formation of s(2)U34.</text>
</comment>
<comment type="catalytic activity">
    <reaction evidence="1">
        <text>S-sulfanyl-L-cysteinyl-[protein] + uridine(34) in tRNA + AH2 + ATP = 2-thiouridine(34) in tRNA + L-cysteinyl-[protein] + A + AMP + diphosphate + H(+)</text>
        <dbReference type="Rhea" id="RHEA:47032"/>
        <dbReference type="Rhea" id="RHEA-COMP:10131"/>
        <dbReference type="Rhea" id="RHEA-COMP:11726"/>
        <dbReference type="Rhea" id="RHEA-COMP:11727"/>
        <dbReference type="Rhea" id="RHEA-COMP:11728"/>
        <dbReference type="ChEBI" id="CHEBI:13193"/>
        <dbReference type="ChEBI" id="CHEBI:15378"/>
        <dbReference type="ChEBI" id="CHEBI:17499"/>
        <dbReference type="ChEBI" id="CHEBI:29950"/>
        <dbReference type="ChEBI" id="CHEBI:30616"/>
        <dbReference type="ChEBI" id="CHEBI:33019"/>
        <dbReference type="ChEBI" id="CHEBI:61963"/>
        <dbReference type="ChEBI" id="CHEBI:65315"/>
        <dbReference type="ChEBI" id="CHEBI:87170"/>
        <dbReference type="ChEBI" id="CHEBI:456215"/>
        <dbReference type="EC" id="2.8.1.13"/>
    </reaction>
</comment>
<comment type="subcellular location">
    <subcellularLocation>
        <location evidence="1">Cytoplasm</location>
    </subcellularLocation>
</comment>
<comment type="similarity">
    <text evidence="1">Belongs to the MnmA/TRMU family.</text>
</comment>
<name>MNMA_DESHY</name>
<accession>Q24US9</accession>
<protein>
    <recommendedName>
        <fullName evidence="1">tRNA-specific 2-thiouridylase MnmA</fullName>
        <ecNumber evidence="1">2.8.1.13</ecNumber>
    </recommendedName>
</protein>
<keyword id="KW-0067">ATP-binding</keyword>
<keyword id="KW-0963">Cytoplasm</keyword>
<keyword id="KW-1015">Disulfide bond</keyword>
<keyword id="KW-0547">Nucleotide-binding</keyword>
<keyword id="KW-1185">Reference proteome</keyword>
<keyword id="KW-0694">RNA-binding</keyword>
<keyword id="KW-0808">Transferase</keyword>
<keyword id="KW-0819">tRNA processing</keyword>
<keyword id="KW-0820">tRNA-binding</keyword>
<feature type="chain" id="PRO_0000349611" description="tRNA-specific 2-thiouridylase MnmA">
    <location>
        <begin position="1"/>
        <end position="370"/>
    </location>
</feature>
<feature type="region of interest" description="Interaction with tRNA" evidence="1">
    <location>
        <begin position="153"/>
        <end position="155"/>
    </location>
</feature>
<feature type="region of interest" description="Interaction with tRNA" evidence="1">
    <location>
        <begin position="310"/>
        <end position="311"/>
    </location>
</feature>
<feature type="active site" description="Nucleophile" evidence="1">
    <location>
        <position position="105"/>
    </location>
</feature>
<feature type="active site" description="Cysteine persulfide intermediate" evidence="1">
    <location>
        <position position="204"/>
    </location>
</feature>
<feature type="binding site" evidence="1">
    <location>
        <begin position="12"/>
        <end position="19"/>
    </location>
    <ligand>
        <name>ATP</name>
        <dbReference type="ChEBI" id="CHEBI:30616"/>
    </ligand>
</feature>
<feature type="binding site" evidence="1">
    <location>
        <position position="38"/>
    </location>
    <ligand>
        <name>ATP</name>
        <dbReference type="ChEBI" id="CHEBI:30616"/>
    </ligand>
</feature>
<feature type="binding site" evidence="1">
    <location>
        <position position="129"/>
    </location>
    <ligand>
        <name>ATP</name>
        <dbReference type="ChEBI" id="CHEBI:30616"/>
    </ligand>
</feature>
<feature type="site" description="Interaction with tRNA" evidence="1">
    <location>
        <position position="130"/>
    </location>
</feature>
<feature type="site" description="Interaction with tRNA" evidence="1">
    <location>
        <position position="352"/>
    </location>
</feature>
<feature type="disulfide bond" description="Alternate" evidence="1">
    <location>
        <begin position="105"/>
        <end position="204"/>
    </location>
</feature>
<proteinExistence type="inferred from homology"/>
<sequence>MTLTEKKKVVVGMSGGVDSSMAAALLKEEGYEVIGITLQTMPSGGPDDVGGCCSITAIDDARRVAHQLGIPHYVLNFRTIFDENVIDYFTNAYLSGETPNPCTMCNRVVRWGEFLRKARALGADYLATGHYAKVLQDPQSGRCFLSRPTDTWKDQTYMLYNLTQDQLKHTLFPLADYKKEHIREMAAERGLLRVSRKPDSQEICFIPDDDYVSFIRERSPEKIKPGNFVDRQGNILGRHQGLINYTVGQRKGLGVTFGKPMFVLGFNVEGNEVILGEDQEVYAHTLLATDLNWIAIPGVEGPLTVQAKIRYKAPLAEAKIIPLKDSETLPGAIGPVVRVEFTTPQRAITPGQAVVFYQGELVVGGGKIIT</sequence>